<geneLocation type="plasmid">
    <name>pAO1</name>
</geneLocation>
<gene>
    <name type="primary">nepB</name>
    <name type="ORF">ORF166</name>
    <name type="ORF">ORF60</name>
</gene>
<proteinExistence type="evidence at protein level"/>
<keyword id="KW-1003">Cell membrane</keyword>
<keyword id="KW-0472">Membrane</keyword>
<keyword id="KW-0614">Plasmid</keyword>
<keyword id="KW-0812">Transmembrane</keyword>
<keyword id="KW-1133">Transmembrane helix</keyword>
<keyword id="KW-0813">Transport</keyword>
<name>NEPB_PAENI</name>
<comment type="function">
    <text evidence="2">Component of an efflux pump responsible for the transport of nicotine breakdown products, in particular methylamine, out of the cell. This pump apparently serves as a metabolic valve for nicotine catabolites and may protect the bacteria from the potentially toxic side effects of these compounds.</text>
</comment>
<comment type="subunit">
    <text evidence="2">The efflux pump is composed of NepA and NepB.</text>
</comment>
<comment type="subcellular location">
    <subcellularLocation>
        <location evidence="3">Cell membrane</location>
        <topology evidence="3">Multi-pass membrane protein</topology>
    </subcellularLocation>
</comment>
<comment type="induction">
    <text evidence="2">Is transcribed only in the presence of nicotine under the control of the transcriptional activator PmfR. Forms part of an operon with nepA, folD, mabO and purU.</text>
</comment>
<comment type="similarity">
    <text evidence="3">Belongs to the drug/metabolite transporter (DMT) superfamily. Small multidrug resistance (SMR) (TC 2.A.7.1) family. NepA/NepB subfamily.</text>
</comment>
<evidence type="ECO:0000255" key="1"/>
<evidence type="ECO:0000269" key="2">
    <source>
    </source>
</evidence>
<evidence type="ECO:0000305" key="3"/>
<dbReference type="EMBL" id="AJ507836">
    <property type="protein sequence ID" value="CAD47918.1"/>
    <property type="molecule type" value="Genomic_DNA"/>
</dbReference>
<dbReference type="RefSeq" id="WP_016359429.1">
    <property type="nucleotide sequence ID" value="NC_021229.1"/>
</dbReference>
<dbReference type="RefSeq" id="YP_007988744.1">
    <property type="nucleotide sequence ID" value="NC_021229.1"/>
</dbReference>
<dbReference type="SMR" id="Q8GAI6"/>
<dbReference type="TCDB" id="2.A.7.1.8">
    <property type="family name" value="the drug/metabolite transporter (dmt) superfamily"/>
</dbReference>
<dbReference type="GeneID" id="96993396"/>
<dbReference type="GO" id="GO:0005886">
    <property type="term" value="C:plasma membrane"/>
    <property type="evidence" value="ECO:0007669"/>
    <property type="project" value="UniProtKB-SubCell"/>
</dbReference>
<dbReference type="GO" id="GO:0022857">
    <property type="term" value="F:transmembrane transporter activity"/>
    <property type="evidence" value="ECO:0007669"/>
    <property type="project" value="InterPro"/>
</dbReference>
<dbReference type="Gene3D" id="1.10.3730.20">
    <property type="match status" value="1"/>
</dbReference>
<dbReference type="InterPro" id="IPR000390">
    <property type="entry name" value="Small_drug/metabolite_transptr"/>
</dbReference>
<dbReference type="InterPro" id="IPR045324">
    <property type="entry name" value="Small_multidrug_res"/>
</dbReference>
<dbReference type="PANTHER" id="PTHR30561:SF1">
    <property type="entry name" value="MULTIDRUG TRANSPORTER EMRE"/>
    <property type="match status" value="1"/>
</dbReference>
<dbReference type="PANTHER" id="PTHR30561">
    <property type="entry name" value="SMR FAMILY PROTON-DEPENDENT DRUG EFFLUX TRANSPORTER SUGE"/>
    <property type="match status" value="1"/>
</dbReference>
<dbReference type="Pfam" id="PF00893">
    <property type="entry name" value="Multi_Drug_Res"/>
    <property type="match status" value="1"/>
</dbReference>
<dbReference type="SUPFAM" id="SSF103481">
    <property type="entry name" value="Multidrug resistance efflux transporter EmrE"/>
    <property type="match status" value="1"/>
</dbReference>
<protein>
    <recommendedName>
        <fullName>Nicotine metabolites export pump subunit NepB</fullName>
    </recommendedName>
    <alternativeName>
        <fullName>SMR efflux pump subunit NepB</fullName>
    </alternativeName>
</protein>
<feature type="chain" id="PRO_0000429453" description="Nicotine metabolites export pump subunit NepB">
    <location>
        <begin position="1"/>
        <end position="166"/>
    </location>
</feature>
<feature type="transmembrane region" description="Helical" evidence="1">
    <location>
        <begin position="51"/>
        <end position="71"/>
    </location>
</feature>
<feature type="transmembrane region" description="Helical" evidence="1">
    <location>
        <begin position="77"/>
        <end position="97"/>
    </location>
</feature>
<feature type="transmembrane region" description="Helical" evidence="1">
    <location>
        <begin position="108"/>
        <end position="128"/>
    </location>
</feature>
<feature type="transmembrane region" description="Helical" evidence="1">
    <location>
        <begin position="133"/>
        <end position="153"/>
    </location>
</feature>
<sequence length="166" mass="17750">MSSYARRTPVRTVLNFCTAIRQIITGEAGSVAADKGNRGQKRAPLLHRHRLHAWLYLGSAITTEVTGTVILDFSEGFQLPAQTTAAMALYAFSFFLLTRALRAVPLSVAYATWSGLGTVAVAFAGAIIHGEAVTLGRITAITAVIGGIVILNLATTRQHSARRKDV</sequence>
<organism>
    <name type="scientific">Paenarthrobacter nicotinovorans</name>
    <name type="common">Arthrobacter nicotinovorans</name>
    <dbReference type="NCBI Taxonomy" id="29320"/>
    <lineage>
        <taxon>Bacteria</taxon>
        <taxon>Bacillati</taxon>
        <taxon>Actinomycetota</taxon>
        <taxon>Actinomycetes</taxon>
        <taxon>Micrococcales</taxon>
        <taxon>Micrococcaceae</taxon>
        <taxon>Paenarthrobacter</taxon>
    </lineage>
</organism>
<reference key="1">
    <citation type="journal article" date="2003" name="J. Bacteriol.">
        <title>Sequence of the 165-kilobase catabolic plasmid pAO1 from Arthrobacter nicotinovorans and identification of a pAO1-dependent nicotine uptake system.</title>
        <authorList>
            <person name="Igloi G.L."/>
            <person name="Brandsch R."/>
        </authorList>
    </citation>
    <scope>NUCLEOTIDE SEQUENCE [GENOMIC DNA]</scope>
    <source>
        <strain>ATCC 49919 / DSM 420 / JCM 3874 / KCTC 9902 / LMG 16253 / NBRC 15511</strain>
        <plasmid>pAO1</plasmid>
    </source>
</reference>
<reference key="2">
    <citation type="journal article" date="2007" name="Microbiology">
        <title>A two-component small multidrug resistance pump functions as a metabolic valve during nicotine catabolism by Arthrobacter nicotinovorans.</title>
        <authorList>
            <person name="Ganas P."/>
            <person name="Mihasan M."/>
            <person name="Igloi G.L."/>
            <person name="Brandsch R."/>
        </authorList>
    </citation>
    <scope>FUNCTION</scope>
    <scope>GENE NAME</scope>
    <scope>SUBUNIT</scope>
    <scope>INDUCTION</scope>
    <scope>OPERON STRUCTURE</scope>
    <source>
        <strain>ATCC 49919 / DSM 420 / JCM 3874 / KCTC 9902 / LMG 16253 / NBRC 15511</strain>
        <plasmid>pAO1</plasmid>
    </source>
</reference>
<accession>Q8GAI6</accession>